<name>ATR_KLULA</name>
<gene>
    <name type="primary">MEC1</name>
    <name type="ordered locus">KLLA0C15785g</name>
</gene>
<sequence>MDNPRVKYLEELILALKSAGTVGNGIELDSTLQLDEKNGKLLQTLLKNTQSTNTDEVIFHKSFQALDLFLRCNQHLFSANVKEITMIEVILNNMVSCSLMHWSNMQYIWLINKYVSAWLKAYSFASTSNLQIWFTEQMVQYEKLLVTCLRGKLEKPTFHSLLKKIVIVNGWIMRDGLLRNYSYRRWQSQFQKLMRLLAFVLKSTNEPSVEVASILQLLVRYISLSKESLSIFRFSFDLIQTLIKDHHQHISPTILAKTLLRTLYLCIHDESKLAEIKNTFELHEWINTNKNADPLFIRSIKYVSVKLGFLESMEEFTFSNKQLHWLHQAIENPKLRLVSGNVRNCIADSADIRSFYDKVKESLLNTIKDGDTAKLTHSMHSIRQLAIKEKFVNNNLVRSPQVEFNASQNMRLSSLNLVPLHKSLAFQLLAKHVIKSIPITDMPEAMLTGVVLILIEVFSRFEPPKLEETSDLIQQSDGYGCLQVFQRASNSRSRFLRLLSVRLLPYFASLGSKYEDINLKFLIIFLQKPKAPYLTETLHMSWINLIINCNSEYFDDLLLKLIDLFNSSDFAEHTMMAAQLRYLSKIQGKSPYQLLSPILPVLFKKMGRSLVEKKLGLQRIVQLVDYPAKTLLENFQRYVVPSALGQYKSDVITEVARIMSGNDKSLVEEKKLKLLDRNSRQIFAVALVKHGFFSIETIQTLFLNTAPKFRKNYITLYLPDYKTLAEVLKMSKQILTLDGQITETERCVLSSLRFLLITNFSKDKRRGTRFKNIEDWNEEMEEQFQQKLEQNVLGIFQVFSNDMHDSDGKTSYYEKLRVLNGISFLMKYASKKSIISALAQLSICLQTGSEIPEIQHNTLECWHLLIKLLNEEQITAIINDLFCLILQKWSTFSSSCKLECQAIFDTLLKDRQKLVLEGRPFILLAFLNNPEFQVLERHPTVARKVLKVISTTNWLKVFTENLGSNNRYVILQTLLELEKYFSTTIHRKHVDVVTKHDDSSHLSTLLGALLDSTYKFRNRDLKICQIAASCISLIGLLDVTKHALPRNTNLSEEICDFNNHSQTVKFLISIVNNILVPAFWQSENPTKQLFVALVMQESLKYCGLSSVNWDINRPDDYPVEAKLWSRFNDISKTTLFPLLSSLYLAQSWKEYVPLSYPSFKVKDGYQVWIRNLTLDLLKIGTEEDHPLHVFSSLIREDDGTLSNFLLPFITMDIILRANKHNEYSKIIENLSIEFEFIFNFDLQQLNHFQIDSLKMAYNTIFRVYEYCKKWVSSFKQDYQAANGTYMIQEDKVLQVLDRTERFVNTIPSDTLAKKSLETDSFERSALYLEQSYREHGTSSLASTDLLQCIQNTYAEIGDVDAVGGVLKMFSTGNLTTKIEELQYSKNWKMAQDCFEALGDFKLSANSTTSSELVKSSNMKMLKSMYSHQLYEELLMKVKVHLPETKGFLVDNDGDLLNMGIEAVSQTGNIVELTRWIERVEHIQMFNDPSLLLHYNIAKVLQAVSRNQQQNVERYINKCFTLIGAQFTIPSTSTTLLKNREVLQKLHALTDIKLLCSAHTQSEFSNASKALDGRLSHVGSDFSPNHYLLSIRKTVEIISKNQHLQNDISNVYFQLSQLDRKENRLDLAAEDLMNALKYNHHSAELEFAEILWKQGEKDMALKTVAEITKRFKDDPSTASSENQDFKEVLLKYTEWLDLSNSSVSEQIIKQYNELIRFDKNWDAPFYSMGLYYSKLLEKKKAEGYVSDGSLEYRSITNFLTSFEKGSPNIRQSLPKVVTLWLDTAKNDVNNSISDVSNYSSRICNKIDTAVKNCGIHIWYTVLTQLLSRLMHPHTATIHTIVNILFHMTLEYPSVMLWYISILLNSESLERRNIGKQIVEAFQKKNPRTKLPGTAISLVQSLTRVCIKDVKNTASRSGRSIDSDFKFNLELAPNDMCVPVNINLKKLLPSTATSMNSDLFKSVMVSIARFSSQYMVFNSLKKPKKLTVIGSDGNIYGIMCKKEDVRQDNQYMQFANTMSFLLSKDVESRKRNLGITTYGVLSLREDCGLLEIVPNVVTLRSLLSMKYESMKIKYSLKSLQEKWQSIPSDQKLAFHKDCLKKFPPVLYQWFLDNFPDPITWYNARNGFVRSYSVMAMVGHILGLGDRHCENILLDVLTGRVLHVDFDCLFEKGKKLPVPEIVPFRLTQNITDAFGIIGTEGTFKKSSEVTLRVMRNNEIGLVNIIETIMYDRKIDESIQNALKVLRDKIRGIDARDGLALSVSGQVEALTQESCSVENLSKMYIGWLPFW</sequence>
<reference key="1">
    <citation type="journal article" date="2004" name="Nature">
        <title>Genome evolution in yeasts.</title>
        <authorList>
            <person name="Dujon B."/>
            <person name="Sherman D."/>
            <person name="Fischer G."/>
            <person name="Durrens P."/>
            <person name="Casaregola S."/>
            <person name="Lafontaine I."/>
            <person name="de Montigny J."/>
            <person name="Marck C."/>
            <person name="Neuveglise C."/>
            <person name="Talla E."/>
            <person name="Goffard N."/>
            <person name="Frangeul L."/>
            <person name="Aigle M."/>
            <person name="Anthouard V."/>
            <person name="Babour A."/>
            <person name="Barbe V."/>
            <person name="Barnay S."/>
            <person name="Blanchin S."/>
            <person name="Beckerich J.-M."/>
            <person name="Beyne E."/>
            <person name="Bleykasten C."/>
            <person name="Boisrame A."/>
            <person name="Boyer J."/>
            <person name="Cattolico L."/>
            <person name="Confanioleri F."/>
            <person name="de Daruvar A."/>
            <person name="Despons L."/>
            <person name="Fabre E."/>
            <person name="Fairhead C."/>
            <person name="Ferry-Dumazet H."/>
            <person name="Groppi A."/>
            <person name="Hantraye F."/>
            <person name="Hennequin C."/>
            <person name="Jauniaux N."/>
            <person name="Joyet P."/>
            <person name="Kachouri R."/>
            <person name="Kerrest A."/>
            <person name="Koszul R."/>
            <person name="Lemaire M."/>
            <person name="Lesur I."/>
            <person name="Ma L."/>
            <person name="Muller H."/>
            <person name="Nicaud J.-M."/>
            <person name="Nikolski M."/>
            <person name="Oztas S."/>
            <person name="Ozier-Kalogeropoulos O."/>
            <person name="Pellenz S."/>
            <person name="Potier S."/>
            <person name="Richard G.-F."/>
            <person name="Straub M.-L."/>
            <person name="Suleau A."/>
            <person name="Swennen D."/>
            <person name="Tekaia F."/>
            <person name="Wesolowski-Louvel M."/>
            <person name="Westhof E."/>
            <person name="Wirth B."/>
            <person name="Zeniou-Meyer M."/>
            <person name="Zivanovic Y."/>
            <person name="Bolotin-Fukuhara M."/>
            <person name="Thierry A."/>
            <person name="Bouchier C."/>
            <person name="Caudron B."/>
            <person name="Scarpelli C."/>
            <person name="Gaillardin C."/>
            <person name="Weissenbach J."/>
            <person name="Wincker P."/>
            <person name="Souciet J.-L."/>
        </authorList>
    </citation>
    <scope>NUCLEOTIDE SEQUENCE [LARGE SCALE GENOMIC DNA]</scope>
    <source>
        <strain>ATCC 8585 / CBS 2359 / DSM 70799 / NBRC 1267 / NRRL Y-1140 / WM37</strain>
    </source>
</reference>
<feature type="chain" id="PRO_0000227711" description="Serine/threonine-protein kinase MEC1">
    <location>
        <begin position="1"/>
        <end position="2287"/>
    </location>
</feature>
<feature type="domain" description="FAT" evidence="3">
    <location>
        <begin position="1310"/>
        <end position="1864"/>
    </location>
</feature>
<feature type="domain" description="PI3K/PI4K catalytic" evidence="2">
    <location>
        <begin position="1968"/>
        <end position="2271"/>
    </location>
</feature>
<feature type="domain" description="FATC" evidence="3 4">
    <location>
        <begin position="2255"/>
        <end position="2287"/>
    </location>
</feature>
<feature type="region of interest" description="G-loop" evidence="2">
    <location>
        <begin position="1974"/>
        <end position="1980"/>
    </location>
</feature>
<feature type="region of interest" description="Catalytic loop" evidence="2">
    <location>
        <begin position="2140"/>
        <end position="2148"/>
    </location>
</feature>
<feature type="region of interest" description="Activation loop" evidence="2">
    <location>
        <begin position="2160"/>
        <end position="2184"/>
    </location>
</feature>
<accession>Q6CT34</accession>
<comment type="function">
    <text evidence="1">Serine/threonine protein kinase which activates checkpoint signaling upon genotoxic stresses such as ionizing radiation (IR), ultraviolet light (UV), or DNA replication stalling, thereby acting as a DNA damage sensor. Recognizes the substrate consensus sequence [ST]-Q. Recruited to DNA lesions in order to initiate the DNA repair by homologous recombination. Phosphorylates histone H2A to form H2AS128ph (gamma-H2A) at sites of DNA damage, also involved in the regulation of DNA damage response mechanism. Required for cell growth and meiotic recombination (By similarity).</text>
</comment>
<comment type="catalytic activity">
    <reaction>
        <text>L-seryl-[protein] + ATP = O-phospho-L-seryl-[protein] + ADP + H(+)</text>
        <dbReference type="Rhea" id="RHEA:17989"/>
        <dbReference type="Rhea" id="RHEA-COMP:9863"/>
        <dbReference type="Rhea" id="RHEA-COMP:11604"/>
        <dbReference type="ChEBI" id="CHEBI:15378"/>
        <dbReference type="ChEBI" id="CHEBI:29999"/>
        <dbReference type="ChEBI" id="CHEBI:30616"/>
        <dbReference type="ChEBI" id="CHEBI:83421"/>
        <dbReference type="ChEBI" id="CHEBI:456216"/>
        <dbReference type="EC" id="2.7.11.1"/>
    </reaction>
</comment>
<comment type="catalytic activity">
    <reaction>
        <text>L-threonyl-[protein] + ATP = O-phospho-L-threonyl-[protein] + ADP + H(+)</text>
        <dbReference type="Rhea" id="RHEA:46608"/>
        <dbReference type="Rhea" id="RHEA-COMP:11060"/>
        <dbReference type="Rhea" id="RHEA-COMP:11605"/>
        <dbReference type="ChEBI" id="CHEBI:15378"/>
        <dbReference type="ChEBI" id="CHEBI:30013"/>
        <dbReference type="ChEBI" id="CHEBI:30616"/>
        <dbReference type="ChEBI" id="CHEBI:61977"/>
        <dbReference type="ChEBI" id="CHEBI:456216"/>
        <dbReference type="EC" id="2.7.11.1"/>
    </reaction>
</comment>
<comment type="subcellular location">
    <subcellularLocation>
        <location evidence="1">Nucleus</location>
    </subcellularLocation>
    <text evidence="1">Localizes to nuclear DNA repair foci in response to DNA double strand breaks.</text>
</comment>
<comment type="similarity">
    <text evidence="5">Belongs to the PI3/PI4-kinase family. ATM subfamily.</text>
</comment>
<protein>
    <recommendedName>
        <fullName>Serine/threonine-protein kinase MEC1</fullName>
        <ecNumber>2.7.11.1</ecNumber>
    </recommendedName>
    <alternativeName>
        <fullName>ATR homolog</fullName>
    </alternativeName>
    <alternativeName>
        <fullName>DNA-damage checkpoint kinase MEC1</fullName>
    </alternativeName>
    <alternativeName>
        <fullName>Mitosis entry checkpoint protein 1</fullName>
    </alternativeName>
</protein>
<keyword id="KW-0067">ATP-binding</keyword>
<keyword id="KW-0156">Chromatin regulator</keyword>
<keyword id="KW-0227">DNA damage</keyword>
<keyword id="KW-0234">DNA repair</keyword>
<keyword id="KW-0418">Kinase</keyword>
<keyword id="KW-0469">Meiosis</keyword>
<keyword id="KW-0547">Nucleotide-binding</keyword>
<keyword id="KW-0539">Nucleus</keyword>
<keyword id="KW-1185">Reference proteome</keyword>
<keyword id="KW-0723">Serine/threonine-protein kinase</keyword>
<keyword id="KW-0808">Transferase</keyword>
<organism>
    <name type="scientific">Kluyveromyces lactis (strain ATCC 8585 / CBS 2359 / DSM 70799 / NBRC 1267 / NRRL Y-1140 / WM37)</name>
    <name type="common">Yeast</name>
    <name type="synonym">Candida sphaerica</name>
    <dbReference type="NCBI Taxonomy" id="284590"/>
    <lineage>
        <taxon>Eukaryota</taxon>
        <taxon>Fungi</taxon>
        <taxon>Dikarya</taxon>
        <taxon>Ascomycota</taxon>
        <taxon>Saccharomycotina</taxon>
        <taxon>Saccharomycetes</taxon>
        <taxon>Saccharomycetales</taxon>
        <taxon>Saccharomycetaceae</taxon>
        <taxon>Kluyveromyces</taxon>
    </lineage>
</organism>
<proteinExistence type="inferred from homology"/>
<dbReference type="EC" id="2.7.11.1"/>
<dbReference type="EMBL" id="CR382123">
    <property type="protein sequence ID" value="CAH01756.1"/>
    <property type="molecule type" value="Genomic_DNA"/>
</dbReference>
<dbReference type="RefSeq" id="XP_452905.1">
    <property type="nucleotide sequence ID" value="XM_452905.1"/>
</dbReference>
<dbReference type="SMR" id="Q6CT34"/>
<dbReference type="FunCoup" id="Q6CT34">
    <property type="interactions" value="1317"/>
</dbReference>
<dbReference type="STRING" id="284590.Q6CT34"/>
<dbReference type="PaxDb" id="284590-Q6CT34"/>
<dbReference type="KEGG" id="kla:KLLA0_C15785g"/>
<dbReference type="eggNOG" id="KOG0890">
    <property type="taxonomic scope" value="Eukaryota"/>
</dbReference>
<dbReference type="HOGENOM" id="CLU_000178_4_0_1"/>
<dbReference type="InParanoid" id="Q6CT34"/>
<dbReference type="OMA" id="NWLDESN"/>
<dbReference type="Proteomes" id="UP000000598">
    <property type="component" value="Chromosome C"/>
</dbReference>
<dbReference type="GO" id="GO:0005694">
    <property type="term" value="C:chromosome"/>
    <property type="evidence" value="ECO:0007669"/>
    <property type="project" value="TreeGrafter"/>
</dbReference>
<dbReference type="GO" id="GO:0005634">
    <property type="term" value="C:nucleus"/>
    <property type="evidence" value="ECO:0007669"/>
    <property type="project" value="UniProtKB-SubCell"/>
</dbReference>
<dbReference type="GO" id="GO:0005524">
    <property type="term" value="F:ATP binding"/>
    <property type="evidence" value="ECO:0007669"/>
    <property type="project" value="UniProtKB-KW"/>
</dbReference>
<dbReference type="GO" id="GO:0106310">
    <property type="term" value="F:protein serine kinase activity"/>
    <property type="evidence" value="ECO:0007669"/>
    <property type="project" value="RHEA"/>
</dbReference>
<dbReference type="GO" id="GO:0004674">
    <property type="term" value="F:protein serine/threonine kinase activity"/>
    <property type="evidence" value="ECO:0007669"/>
    <property type="project" value="UniProtKB-KW"/>
</dbReference>
<dbReference type="GO" id="GO:0006325">
    <property type="term" value="P:chromatin organization"/>
    <property type="evidence" value="ECO:0007669"/>
    <property type="project" value="UniProtKB-KW"/>
</dbReference>
<dbReference type="GO" id="GO:0000077">
    <property type="term" value="P:DNA damage checkpoint signaling"/>
    <property type="evidence" value="ECO:0007669"/>
    <property type="project" value="TreeGrafter"/>
</dbReference>
<dbReference type="GO" id="GO:0006281">
    <property type="term" value="P:DNA repair"/>
    <property type="evidence" value="ECO:0007669"/>
    <property type="project" value="UniProtKB-KW"/>
</dbReference>
<dbReference type="GO" id="GO:0051321">
    <property type="term" value="P:meiotic cell cycle"/>
    <property type="evidence" value="ECO:0007669"/>
    <property type="project" value="UniProtKB-KW"/>
</dbReference>
<dbReference type="GO" id="GO:0019222">
    <property type="term" value="P:regulation of metabolic process"/>
    <property type="evidence" value="ECO:0007669"/>
    <property type="project" value="UniProtKB-ARBA"/>
</dbReference>
<dbReference type="GO" id="GO:0000723">
    <property type="term" value="P:telomere maintenance"/>
    <property type="evidence" value="ECO:0007669"/>
    <property type="project" value="TreeGrafter"/>
</dbReference>
<dbReference type="CDD" id="cd00892">
    <property type="entry name" value="PIKKc_ATR"/>
    <property type="match status" value="1"/>
</dbReference>
<dbReference type="FunFam" id="1.10.1070.11:FF:000033">
    <property type="entry name" value="Serine/threonine-protein kinase MEC1"/>
    <property type="match status" value="1"/>
</dbReference>
<dbReference type="Gene3D" id="1.10.1070.11">
    <property type="entry name" value="Phosphatidylinositol 3-/4-kinase, catalytic domain"/>
    <property type="match status" value="1"/>
</dbReference>
<dbReference type="Gene3D" id="3.30.1010.10">
    <property type="entry name" value="Phosphatidylinositol 3-kinase Catalytic Subunit, Chain A, domain 4"/>
    <property type="match status" value="1"/>
</dbReference>
<dbReference type="Gene3D" id="1.25.40.10">
    <property type="entry name" value="Tetratricopeptide repeat domain"/>
    <property type="match status" value="1"/>
</dbReference>
<dbReference type="InterPro" id="IPR016024">
    <property type="entry name" value="ARM-type_fold"/>
</dbReference>
<dbReference type="InterPro" id="IPR056802">
    <property type="entry name" value="ATR-like_M-HEAT"/>
</dbReference>
<dbReference type="InterPro" id="IPR050517">
    <property type="entry name" value="DDR_Repair_Kinase"/>
</dbReference>
<dbReference type="InterPro" id="IPR003152">
    <property type="entry name" value="FATC_dom"/>
</dbReference>
<dbReference type="InterPro" id="IPR011009">
    <property type="entry name" value="Kinase-like_dom_sf"/>
</dbReference>
<dbReference type="InterPro" id="IPR000403">
    <property type="entry name" value="PI3/4_kinase_cat_dom"/>
</dbReference>
<dbReference type="InterPro" id="IPR036940">
    <property type="entry name" value="PI3/4_kinase_cat_sf"/>
</dbReference>
<dbReference type="InterPro" id="IPR018936">
    <property type="entry name" value="PI3/4_kinase_CS"/>
</dbReference>
<dbReference type="InterPro" id="IPR003151">
    <property type="entry name" value="PIK-rel_kinase_FAT"/>
</dbReference>
<dbReference type="InterPro" id="IPR014009">
    <property type="entry name" value="PIK_FAT"/>
</dbReference>
<dbReference type="InterPro" id="IPR011990">
    <property type="entry name" value="TPR-like_helical_dom_sf"/>
</dbReference>
<dbReference type="InterPro" id="IPR012993">
    <property type="entry name" value="UME"/>
</dbReference>
<dbReference type="PANTHER" id="PTHR11139">
    <property type="entry name" value="ATAXIA TELANGIECTASIA MUTATED ATM -RELATED"/>
    <property type="match status" value="1"/>
</dbReference>
<dbReference type="PANTHER" id="PTHR11139:SF125">
    <property type="entry name" value="SERINE_THREONINE-PROTEIN KINASE MEC1"/>
    <property type="match status" value="1"/>
</dbReference>
<dbReference type="Pfam" id="PF02259">
    <property type="entry name" value="FAT"/>
    <property type="match status" value="1"/>
</dbReference>
<dbReference type="Pfam" id="PF02260">
    <property type="entry name" value="FATC"/>
    <property type="match status" value="1"/>
</dbReference>
<dbReference type="Pfam" id="PF23593">
    <property type="entry name" value="HEAT_ATR"/>
    <property type="match status" value="1"/>
</dbReference>
<dbReference type="Pfam" id="PF25385">
    <property type="entry name" value="HEAT_MEC1_N"/>
    <property type="match status" value="2"/>
</dbReference>
<dbReference type="Pfam" id="PF25030">
    <property type="entry name" value="M-HEAT_ATR"/>
    <property type="match status" value="1"/>
</dbReference>
<dbReference type="Pfam" id="PF00454">
    <property type="entry name" value="PI3_PI4_kinase"/>
    <property type="match status" value="1"/>
</dbReference>
<dbReference type="Pfam" id="PF08064">
    <property type="entry name" value="UME"/>
    <property type="match status" value="1"/>
</dbReference>
<dbReference type="SMART" id="SM01343">
    <property type="entry name" value="FATC"/>
    <property type="match status" value="1"/>
</dbReference>
<dbReference type="SMART" id="SM00146">
    <property type="entry name" value="PI3Kc"/>
    <property type="match status" value="1"/>
</dbReference>
<dbReference type="SMART" id="SM00802">
    <property type="entry name" value="UME"/>
    <property type="match status" value="1"/>
</dbReference>
<dbReference type="SUPFAM" id="SSF48371">
    <property type="entry name" value="ARM repeat"/>
    <property type="match status" value="1"/>
</dbReference>
<dbReference type="SUPFAM" id="SSF56112">
    <property type="entry name" value="Protein kinase-like (PK-like)"/>
    <property type="match status" value="1"/>
</dbReference>
<dbReference type="SUPFAM" id="SSF48452">
    <property type="entry name" value="TPR-like"/>
    <property type="match status" value="1"/>
</dbReference>
<dbReference type="PROSITE" id="PS51189">
    <property type="entry name" value="FAT"/>
    <property type="match status" value="1"/>
</dbReference>
<dbReference type="PROSITE" id="PS51190">
    <property type="entry name" value="FATC"/>
    <property type="match status" value="1"/>
</dbReference>
<dbReference type="PROSITE" id="PS00915">
    <property type="entry name" value="PI3_4_KINASE_1"/>
    <property type="match status" value="1"/>
</dbReference>
<dbReference type="PROSITE" id="PS50290">
    <property type="entry name" value="PI3_4_KINASE_3"/>
    <property type="match status" value="1"/>
</dbReference>
<evidence type="ECO:0000250" key="1"/>
<evidence type="ECO:0000255" key="2">
    <source>
        <dbReference type="PROSITE-ProRule" id="PRU00269"/>
    </source>
</evidence>
<evidence type="ECO:0000255" key="3">
    <source>
        <dbReference type="PROSITE-ProRule" id="PRU00534"/>
    </source>
</evidence>
<evidence type="ECO:0000255" key="4">
    <source>
        <dbReference type="PROSITE-ProRule" id="PRU00535"/>
    </source>
</evidence>
<evidence type="ECO:0000305" key="5"/>